<feature type="chain" id="PRO_0000065622" description="RISC-loading complex subunit TARBP2">
    <location>
        <begin position="1"/>
        <end position="366"/>
    </location>
</feature>
<feature type="domain" description="DRBM 1" evidence="2">
    <location>
        <begin position="30"/>
        <end position="97"/>
    </location>
</feature>
<feature type="domain" description="DRBM 2" evidence="2">
    <location>
        <begin position="159"/>
        <end position="227"/>
    </location>
</feature>
<feature type="domain" description="DRBM 3" evidence="2">
    <location>
        <begin position="293"/>
        <end position="361"/>
    </location>
</feature>
<feature type="region of interest" description="Sufficient for interaction with PRKRA">
    <location>
        <begin position="22"/>
        <end position="105"/>
    </location>
</feature>
<feature type="region of interest" description="Sufficient for interaction with PRKRA">
    <location>
        <begin position="152"/>
        <end position="234"/>
    </location>
</feature>
<feature type="region of interest" description="Sufficient for interaction with DICER1">
    <location>
        <begin position="228"/>
        <end position="366"/>
    </location>
</feature>
<feature type="region of interest" description="Sufficient for interaction with PRKRA">
    <location>
        <begin position="287"/>
        <end position="366"/>
    </location>
</feature>
<feature type="modified residue" description="Phosphoserine" evidence="25">
    <location>
        <position position="152"/>
    </location>
</feature>
<feature type="splice variant" id="VSP_035584" description="In isoform 2." evidence="21">
    <location>
        <begin position="1"/>
        <end position="21"/>
    </location>
</feature>
<feature type="sequence variant" id="VAR_046992" description="In dbSNP:rs1126500." evidence="15 20">
    <original>S</original>
    <variation>F</variation>
    <location>
        <position position="251"/>
    </location>
</feature>
<feature type="sequence conflict" description="In Ref. 1; AAA36765." evidence="22" ref="1">
    <original>P</original>
    <variation>A</variation>
    <location>
        <position position="144"/>
    </location>
</feature>
<feature type="helix" evidence="30">
    <location>
        <begin position="21"/>
        <end position="25"/>
    </location>
</feature>
<feature type="helix" evidence="28">
    <location>
        <begin position="31"/>
        <end position="41"/>
    </location>
</feature>
<feature type="strand" evidence="28">
    <location>
        <begin position="47"/>
        <end position="53"/>
    </location>
</feature>
<feature type="strand" evidence="30">
    <location>
        <begin position="57"/>
        <end position="59"/>
    </location>
</feature>
<feature type="strand" evidence="28">
    <location>
        <begin position="62"/>
        <end position="68"/>
    </location>
</feature>
<feature type="strand" evidence="28">
    <location>
        <begin position="71"/>
        <end position="79"/>
    </location>
</feature>
<feature type="helix" evidence="28">
    <location>
        <begin position="80"/>
        <end position="95"/>
    </location>
</feature>
<feature type="helix" evidence="27">
    <location>
        <begin position="161"/>
        <end position="170"/>
    </location>
</feature>
<feature type="strand" evidence="27">
    <location>
        <begin position="177"/>
        <end position="185"/>
    </location>
</feature>
<feature type="strand" evidence="26">
    <location>
        <begin position="187"/>
        <end position="189"/>
    </location>
</feature>
<feature type="strand" evidence="27">
    <location>
        <begin position="191"/>
        <end position="198"/>
    </location>
</feature>
<feature type="strand" evidence="27">
    <location>
        <begin position="201"/>
        <end position="209"/>
    </location>
</feature>
<feature type="helix" evidence="27">
    <location>
        <begin position="210"/>
        <end position="226"/>
    </location>
</feature>
<feature type="helix" evidence="31">
    <location>
        <begin position="265"/>
        <end position="270"/>
    </location>
</feature>
<feature type="helix" evidence="31">
    <location>
        <begin position="274"/>
        <end position="281"/>
    </location>
</feature>
<feature type="helix" evidence="31">
    <location>
        <begin position="285"/>
        <end position="289"/>
    </location>
</feature>
<feature type="helix" evidence="31">
    <location>
        <begin position="291"/>
        <end position="293"/>
    </location>
</feature>
<feature type="helix" evidence="31">
    <location>
        <begin position="294"/>
        <end position="305"/>
    </location>
</feature>
<feature type="strand" evidence="31">
    <location>
        <begin position="309"/>
        <end position="316"/>
    </location>
</feature>
<feature type="strand" evidence="31">
    <location>
        <begin position="323"/>
        <end position="329"/>
    </location>
</feature>
<feature type="strand" evidence="29">
    <location>
        <begin position="331"/>
        <end position="333"/>
    </location>
</feature>
<feature type="strand" evidence="31">
    <location>
        <begin position="335"/>
        <end position="343"/>
    </location>
</feature>
<feature type="helix" evidence="31">
    <location>
        <begin position="344"/>
        <end position="364"/>
    </location>
</feature>
<reference key="1">
    <citation type="journal article" date="1991" name="Science">
        <title>Characterization of a human TAR RNA-binding protein that activates the HIV-1 LTR.</title>
        <authorList>
            <person name="Gatignol A."/>
            <person name="Buckler-White A.J."/>
            <person name="Berkhout B."/>
            <person name="Jeang K.T."/>
        </authorList>
    </citation>
    <scope>NUCLEOTIDE SEQUENCE [MRNA] (ISOFORMS 1 AND 2)</scope>
    <scope>FUNCTION (MICROBIAL INFECTION)</scope>
    <scope>VARIANT PHE-251</scope>
</reference>
<reference key="2">
    <citation type="submission" date="2000-04" db="EMBL/GenBank/DDBJ databases">
        <authorList>
            <person name="Gatignol A."/>
            <person name="Duarte M."/>
        </authorList>
    </citation>
    <scope>SEQUENCE REVISION</scope>
</reference>
<reference key="3">
    <citation type="journal article" date="1995" name="Genomics">
        <title>Genetic mapping in human and mouse of the locus encoding TRBP, a protein that binds the TAR region of the human immunodeficiency virus (HIV-1).</title>
        <authorList>
            <person name="Kozak C.A."/>
            <person name="Gatignol A."/>
            <person name="Graham K."/>
            <person name="Jeang K.T."/>
            <person name="McBride O.W."/>
        </authorList>
    </citation>
    <scope>NUCLEOTIDE SEQUENCE [MRNA] (ISOFORM 1)</scope>
    <scope>VARIANT PHE-251</scope>
</reference>
<reference key="4">
    <citation type="submission" date="2003-05" db="EMBL/GenBank/DDBJ databases">
        <title>Cloning of human full-length CDSs in BD Creator(TM) system donor vector.</title>
        <authorList>
            <person name="Kalnine N."/>
            <person name="Chen X."/>
            <person name="Rolfs A."/>
            <person name="Halleck A."/>
            <person name="Hines L."/>
            <person name="Eisenstein S."/>
            <person name="Koundinya M."/>
            <person name="Raphael J."/>
            <person name="Moreira D."/>
            <person name="Kelley T."/>
            <person name="LaBaer J."/>
            <person name="Lin Y."/>
            <person name="Phelan M."/>
            <person name="Farmer A."/>
        </authorList>
    </citation>
    <scope>NUCLEOTIDE SEQUENCE [LARGE SCALE MRNA] (ISOFORM 1)</scope>
</reference>
<reference key="5">
    <citation type="submission" date="2005-07" db="EMBL/GenBank/DDBJ databases">
        <authorList>
            <person name="Mural R.J."/>
            <person name="Istrail S."/>
            <person name="Sutton G.G."/>
            <person name="Florea L."/>
            <person name="Halpern A.L."/>
            <person name="Mobarry C.M."/>
            <person name="Lippert R."/>
            <person name="Walenz B."/>
            <person name="Shatkay H."/>
            <person name="Dew I."/>
            <person name="Miller J.R."/>
            <person name="Flanigan M.J."/>
            <person name="Edwards N.J."/>
            <person name="Bolanos R."/>
            <person name="Fasulo D."/>
            <person name="Halldorsson B.V."/>
            <person name="Hannenhalli S."/>
            <person name="Turner R."/>
            <person name="Yooseph S."/>
            <person name="Lu F."/>
            <person name="Nusskern D.R."/>
            <person name="Shue B.C."/>
            <person name="Zheng X.H."/>
            <person name="Zhong F."/>
            <person name="Delcher A.L."/>
            <person name="Huson D.H."/>
            <person name="Kravitz S.A."/>
            <person name="Mouchard L."/>
            <person name="Reinert K."/>
            <person name="Remington K.A."/>
            <person name="Clark A.G."/>
            <person name="Waterman M.S."/>
            <person name="Eichler E.E."/>
            <person name="Adams M.D."/>
            <person name="Hunkapiller M.W."/>
            <person name="Myers E.W."/>
            <person name="Venter J.C."/>
        </authorList>
    </citation>
    <scope>NUCLEOTIDE SEQUENCE [LARGE SCALE GENOMIC DNA]</scope>
</reference>
<reference key="6">
    <citation type="journal article" date="2004" name="Genome Res.">
        <title>The status, quality, and expansion of the NIH full-length cDNA project: the Mammalian Gene Collection (MGC).</title>
        <authorList>
            <consortium name="The MGC Project Team"/>
        </authorList>
    </citation>
    <scope>NUCLEOTIDE SEQUENCE [LARGE SCALE MRNA] (ISOFORM 1)</scope>
    <source>
        <tissue>Muscle</tissue>
    </source>
</reference>
<reference key="7">
    <citation type="journal article" date="2001" name="J. Biol. Chem.">
        <title>Organization of the human tarbp2 gene reveals two promoters that are repressed in an astrocytic cell line.</title>
        <authorList>
            <person name="Bannwarth S."/>
            <person name="Talakoub L."/>
            <person name="Letourneur F."/>
            <person name="Duarte M."/>
            <person name="Purcell D.F."/>
            <person name="Hiscott J."/>
            <person name="Gatignol A."/>
        </authorList>
    </citation>
    <scope>NUCLEOTIDE SEQUENCE [GENOMIC DNA] OF 1-74</scope>
    <scope>ALTERNATIVE PROMOTER USAGE</scope>
</reference>
<reference key="8">
    <citation type="journal article" date="1993" name="Mol. Cell. Biol.">
        <title>Relatedness of an RNA-binding motif in human immunodeficiency virus type 1 TAR RNA-binding protein TRBP to human P1/dsI kinase and Drosophila staufen.</title>
        <authorList>
            <person name="Gatignol A."/>
            <person name="Buckler C."/>
            <person name="Jeang K.T."/>
        </authorList>
    </citation>
    <scope>CHARACTERIZATION OF RNA-BINDING</scope>
</reference>
<reference key="9">
    <citation type="journal article" date="2001" name="J. Biol. Chem.">
        <title>Two dimerization domains in the trans-activation response RNA-binding protein (TRBP) individually reverse the protein kinase R inhibition of HIV-1 long terminal repeat expression.</title>
        <authorList>
            <person name="Daher A."/>
            <person name="Longuet M."/>
            <person name="Dorin D."/>
            <person name="Bois F."/>
            <person name="Segeral E."/>
            <person name="Bannwarth S."/>
            <person name="Battisti P.-L."/>
            <person name="Purcell D.F."/>
            <person name="Benarous R."/>
            <person name="Vaquero C."/>
            <person name="Meurs E.F."/>
            <person name="Gatignol A."/>
        </authorList>
    </citation>
    <scope>FUNCTION (MICROBIAL INFECTION)</scope>
    <scope>SELF-ASSOCIATION</scope>
    <scope>INTERACTION WITH EIF2AK2</scope>
</reference>
<reference key="10">
    <citation type="journal article" date="2003" name="J. Biol. Chem.">
        <title>The TAR RNA-binding protein, TRBP, stimulates the expression of TAR-containing RNAs in vitro and in vivo independently of its ability to inhibit the dsRNA-dependent kinase PKR.</title>
        <authorList>
            <person name="Dorin D."/>
            <person name="Bonnet M.C."/>
            <person name="Bannwarth S."/>
            <person name="Gatignol A."/>
            <person name="Meurs E.F."/>
            <person name="Vaquero C."/>
        </authorList>
    </citation>
    <scope>FUNCTION (MICROBIAL INFECTION)</scope>
</reference>
<reference key="11">
    <citation type="journal article" date="2005" name="Cell">
        <title>Human RISC couples microRNA biogenesis and posttranscriptional gene silencing.</title>
        <authorList>
            <person name="Gregory R.I."/>
            <person name="Chendrimada T.P."/>
            <person name="Cooch N."/>
            <person name="Shiekhattar R."/>
        </authorList>
    </citation>
    <scope>FUNCTION</scope>
    <scope>INTERACTION WITH DICER1 AND AGO2</scope>
</reference>
<reference key="12">
    <citation type="journal article" date="2005" name="EMBO Rep.">
        <title>TRBP, a regulator of cellular PKR and HIV-1 virus expression, interacts with Dicer and functions in RNA silencing.</title>
        <authorList>
            <person name="Haase A.D."/>
            <person name="Jaskiewicz L."/>
            <person name="Zhang H."/>
            <person name="Laine S."/>
            <person name="Sack R."/>
            <person name="Gatignol A."/>
            <person name="Filipowicz W."/>
        </authorList>
    </citation>
    <scope>IDENTIFICATION BY MASS SPECTROMETRY</scope>
    <scope>FUNCTION</scope>
    <scope>SELF-ASSOCIATION</scope>
    <scope>INTERACTION WITH DICER1</scope>
</reference>
<reference key="13">
    <citation type="journal article" date="2005" name="Genes Dev.">
        <title>A human, ATP-independent, RISC assembly machine fueled by pre-miRNA.</title>
        <authorList>
            <person name="Maniataki E."/>
            <person name="Mourelatos Z."/>
        </authorList>
    </citation>
    <scope>FUNCTION</scope>
    <scope>INTERACTION WITH DICER1 AND AGO2</scope>
</reference>
<reference key="14">
    <citation type="journal article" date="2005" name="Nature">
        <title>TRBP recruits the Dicer complex to Ago2 for microRNA processing and gene silencing.</title>
        <authorList>
            <person name="Chendrimada T.P."/>
            <person name="Gregory R.I."/>
            <person name="Kumaraswamy E."/>
            <person name="Norman J."/>
            <person name="Cooch N."/>
            <person name="Nishikura K."/>
            <person name="Shiekhattar R."/>
        </authorList>
    </citation>
    <scope>IDENTIFICATION BY MASS SPECTROMETRY</scope>
    <scope>FUNCTION</scope>
    <scope>INTERACTION WITH DICER1 AND AGO2</scope>
    <scope>RNA-BINDING</scope>
</reference>
<reference key="15">
    <citation type="journal article" date="2006" name="EMBO J.">
        <title>The role of PACT in the RNA silencing pathway.</title>
        <authorList>
            <person name="Lee Y."/>
            <person name="Hur I."/>
            <person name="Park S.-Y."/>
            <person name="Kim Y.-K."/>
            <person name="Suh M.R."/>
            <person name="Kim V.N."/>
        </authorList>
    </citation>
    <scope>FUNCTION</scope>
    <scope>INTERACTION WITH DICER1; AGO2 AND PRKRA</scope>
    <scope>SUBCELLULAR LOCATION</scope>
</reference>
<reference key="16">
    <citation type="journal article" date="2007" name="J. Biol. Chem.">
        <title>Human TRBP and PACT directly interact with each other and associate with dicer to facilitate the production of small interfering RNA.</title>
        <authorList>
            <person name="Kok K.H."/>
            <person name="Ng M.-H."/>
            <person name="Ching Y.-P."/>
            <person name="Jin D.-Y."/>
        </authorList>
    </citation>
    <scope>FUNCTION</scope>
    <scope>SELF-ASSOCIATION</scope>
    <scope>INTERACTION WITH DICER1 AND PRKRA</scope>
    <scope>SUBCELLULAR LOCATION</scope>
</reference>
<reference key="17">
    <citation type="journal article" date="2007" name="Mol. Cell">
        <title>RNA helicase A interacts with RISC in human cells and functions in RISC loading.</title>
        <authorList>
            <person name="Robb G.B."/>
            <person name="Rana T.M."/>
        </authorList>
    </citation>
    <scope>INTERACTION WITH DHX9</scope>
</reference>
<reference key="18">
    <citation type="journal article" date="2007" name="Nature">
        <title>MicroRNA silencing through RISC recruitment of eIF6.</title>
        <authorList>
            <person name="Chendrimada T.P."/>
            <person name="Finn K.J."/>
            <person name="Ji X."/>
            <person name="Baillat D."/>
            <person name="Gregory R.I."/>
            <person name="Liebhaber S.A."/>
            <person name="Pasquinelli A.E."/>
            <person name="Shiekhattar R."/>
        </authorList>
    </citation>
    <scope>INTERACTION WITH DICER1; AGO2; EIF6; RPL7A AND MOV10</scope>
    <scope>ASSOCIATION WITH THE 60S RIBOSOME</scope>
</reference>
<reference key="19">
    <citation type="journal article" date="2008" name="Proc. Natl. Acad. Sci. U.S.A.">
        <title>A quantitative atlas of mitotic phosphorylation.</title>
        <authorList>
            <person name="Dephoure N."/>
            <person name="Zhou C."/>
            <person name="Villen J."/>
            <person name="Beausoleil S.A."/>
            <person name="Bakalarski C.E."/>
            <person name="Elledge S.J."/>
            <person name="Gygi S.P."/>
        </authorList>
    </citation>
    <scope>IDENTIFICATION BY MASS SPECTROMETRY [LARGE SCALE ANALYSIS]</scope>
    <source>
        <tissue>Cervix carcinoma</tissue>
    </source>
</reference>
<reference key="20">
    <citation type="journal article" date="2008" name="Proc. Natl. Acad. Sci. U.S.A.">
        <title>In vitro reconstitution of the human RISC-loading complex.</title>
        <authorList>
            <person name="MacRae I.J."/>
            <person name="Ma E."/>
            <person name="Zhou M."/>
            <person name="Robinson C.V."/>
            <person name="Doudna J.A."/>
        </authorList>
    </citation>
    <scope>IDENTIFICATION BY MASS SPECTROMETRY</scope>
    <scope>FUNCTION</scope>
    <scope>INTERACTION WITH DICER1 AND AGO2</scope>
</reference>
<reference key="21">
    <citation type="journal article" date="2008" name="RNA Biol.">
        <title>Interactions between the double-stranded RNA-binding proteins TRBP and PACT define the Medipal domain that mediates protein-protein interactions.</title>
        <authorList>
            <person name="Laraki G."/>
            <person name="Clerzius G."/>
            <person name="Daher A."/>
            <person name="Melendez-Pena C."/>
            <person name="Daniels S."/>
            <person name="Gatignol A."/>
        </authorList>
    </citation>
    <scope>SELF-ASSOCIATION</scope>
    <scope>INTERACTION WITH EIF2AK2 AND PRKRA</scope>
    <scope>SUBCELLULAR LOCATION</scope>
</reference>
<reference key="22">
    <citation type="journal article" date="2009" name="Nat. Genet.">
        <title>A TARBP2 mutation in human cancer impairs microRNA processing and DICER1 function.</title>
        <authorList>
            <person name="Melo S.A."/>
            <person name="Ropero S."/>
            <person name="Moutinho C."/>
            <person name="Aaltonen L.A."/>
            <person name="Yamamoto H."/>
            <person name="Calin G.A."/>
            <person name="Rossi S."/>
            <person name="Fernandez A.F."/>
            <person name="Carneiro F."/>
            <person name="Oliveira C."/>
            <person name="Ferreira B."/>
            <person name="Liu C.-G."/>
            <person name="Villanueva A."/>
            <person name="Capella G."/>
            <person name="Schwartz S. Jr."/>
            <person name="Shiekhattar R."/>
            <person name="Esteller M."/>
        </authorList>
    </citation>
    <scope>RETRACTED PAPER</scope>
</reference>
<reference key="23">
    <citation type="journal article" date="2016" name="Nat. Genet.">
        <title>Retraction: A TARBP2 mutation in human cancer impairs microRNA processing and DICER1 function.</title>
        <authorList>
            <person name="Melo S.A."/>
            <person name="Ropero S."/>
            <person name="Moutinho C."/>
            <person name="Aaltonen L.A."/>
            <person name="Yamamoto H."/>
            <person name="Calin G.A."/>
            <person name="Rossi S."/>
            <person name="Fernandez A.F."/>
            <person name="Carneiro F."/>
            <person name="Oliveira C."/>
            <person name="Ferreira B."/>
            <person name="Liu C.-G."/>
            <person name="Villanueva A."/>
            <person name="Capella G."/>
            <person name="Schwartz S. Jr."/>
            <person name="Shiekhattar R."/>
            <person name="Esteller M."/>
        </authorList>
    </citation>
    <scope>RETRACTION NOTICE OF PUBMED:19219043</scope>
</reference>
<reference key="24">
    <citation type="journal article" date="2011" name="BMC Syst. Biol.">
        <title>Initial characterization of the human central proteome.</title>
        <authorList>
            <person name="Burkard T.R."/>
            <person name="Planyavsky M."/>
            <person name="Kaupe I."/>
            <person name="Breitwieser F.P."/>
            <person name="Buerckstuemmer T."/>
            <person name="Bennett K.L."/>
            <person name="Superti-Furga G."/>
            <person name="Colinge J."/>
        </authorList>
    </citation>
    <scope>IDENTIFICATION BY MASS SPECTROMETRY [LARGE SCALE ANALYSIS]</scope>
</reference>
<reference key="25">
    <citation type="journal article" date="2011" name="J. Virol.">
        <title>Ebolavirus proteins suppress the effects of small interfering RNA by direct interaction with the mammalian RNA interference pathway.</title>
        <authorList>
            <person name="Fabozzi G."/>
            <person name="Nabel C.S."/>
            <person name="Dolan M.A."/>
            <person name="Sullivan N.J."/>
        </authorList>
    </citation>
    <scope>INTERACTION WITH EBOLAVIRUS VP30 (MICROBIAL INFECTION)</scope>
    <scope>INTERACTION WITH EBOLAVIRUS VP35 (MICROBIAL INFECTION)</scope>
</reference>
<reference key="26">
    <citation type="journal article" date="2012" name="Cell">
        <title>Dicer partner proteins tune the length of mature miRNAs in flies and mammals.</title>
        <authorList>
            <person name="Fukunaga R."/>
            <person name="Han B.W."/>
            <person name="Hung J.H."/>
            <person name="Xu J."/>
            <person name="Weng Z."/>
            <person name="Zamore P.D."/>
        </authorList>
    </citation>
    <scope>FUNCTION</scope>
</reference>
<reference key="27">
    <citation type="journal article" date="2014" name="J. Proteomics">
        <title>An enzyme assisted RP-RPLC approach for in-depth analysis of human liver phosphoproteome.</title>
        <authorList>
            <person name="Bian Y."/>
            <person name="Song C."/>
            <person name="Cheng K."/>
            <person name="Dong M."/>
            <person name="Wang F."/>
            <person name="Huang J."/>
            <person name="Sun D."/>
            <person name="Wang L."/>
            <person name="Ye M."/>
            <person name="Zou H."/>
        </authorList>
    </citation>
    <scope>PHOSPHORYLATION [LARGE SCALE ANALYSIS] AT SER-152</scope>
    <scope>IDENTIFICATION BY MASS SPECTROMETRY [LARGE SCALE ANALYSIS]</scope>
    <source>
        <tissue>Liver</tissue>
    </source>
</reference>
<reference key="28">
    <citation type="journal article" date="2019" name="Nature">
        <title>FTSJ3 is an RNA 2'-O-methyltransferase recruited by HIV to avoid innate immune sensing.</title>
        <authorList>
            <person name="Ringeard M."/>
            <person name="Marchand V."/>
            <person name="Decroly E."/>
            <person name="Motorin Y."/>
            <person name="Bennasser Y."/>
        </authorList>
    </citation>
    <scope>FUNCTION (MICROBIAL INFECTION)</scope>
</reference>
<reference key="29">
    <citation type="journal article" date="2019" name="Mol. Immunol.">
        <title>TARBP2 inhibits IRF7 activation by suppressing TRAF6-mediated K63-linked ubiquitination of IRF7.</title>
        <authorList>
            <person name="Ling T."/>
            <person name="Weng G.X."/>
            <person name="Li J."/>
            <person name="Li C."/>
            <person name="Wang W."/>
            <person name="Cao L."/>
            <person name="Rao H."/>
            <person name="Ju C."/>
            <person name="Xu L.G."/>
        </authorList>
    </citation>
    <scope>FUNCTION</scope>
    <scope>INTERACTION WITH IRF7</scope>
</reference>
<reference key="30">
    <citation type="submission" date="2005-11" db="PDB data bank">
        <title>Solution structure of the second DSRBD of TAR RNA-binding protein 2.</title>
        <authorList>
            <consortium name="RIKEN structural genomics initiative (RSGI)"/>
        </authorList>
    </citation>
    <scope>STRUCTURE BY NMR OF 150-225</scope>
</reference>
<evidence type="ECO:0000250" key="1">
    <source>
        <dbReference type="UniProtKB" id="P97473"/>
    </source>
</evidence>
<evidence type="ECO:0000255" key="2">
    <source>
        <dbReference type="HAMAP-Rule" id="MF_03034"/>
    </source>
</evidence>
<evidence type="ECO:0000269" key="3">
    <source>
    </source>
</evidence>
<evidence type="ECO:0000269" key="4">
    <source>
    </source>
</evidence>
<evidence type="ECO:0000269" key="5">
    <source>
    </source>
</evidence>
<evidence type="ECO:0000269" key="6">
    <source>
    </source>
</evidence>
<evidence type="ECO:0000269" key="7">
    <source>
    </source>
</evidence>
<evidence type="ECO:0000269" key="8">
    <source>
    </source>
</evidence>
<evidence type="ECO:0000269" key="9">
    <source>
    </source>
</evidence>
<evidence type="ECO:0000269" key="10">
    <source>
    </source>
</evidence>
<evidence type="ECO:0000269" key="11">
    <source>
    </source>
</evidence>
<evidence type="ECO:0000269" key="12">
    <source>
    </source>
</evidence>
<evidence type="ECO:0000269" key="13">
    <source>
    </source>
</evidence>
<evidence type="ECO:0000269" key="14">
    <source>
    </source>
</evidence>
<evidence type="ECO:0000269" key="15">
    <source>
    </source>
</evidence>
<evidence type="ECO:0000269" key="16">
    <source>
    </source>
</evidence>
<evidence type="ECO:0000269" key="17">
    <source>
    </source>
</evidence>
<evidence type="ECO:0000269" key="18">
    <source>
    </source>
</evidence>
<evidence type="ECO:0000269" key="19">
    <source>
    </source>
</evidence>
<evidence type="ECO:0000269" key="20">
    <source>
    </source>
</evidence>
<evidence type="ECO:0000303" key="21">
    <source>
    </source>
</evidence>
<evidence type="ECO:0000305" key="22"/>
<evidence type="ECO:0000305" key="23">
    <source>
    </source>
</evidence>
<evidence type="ECO:0000305" key="24">
    <source>
    </source>
</evidence>
<evidence type="ECO:0007744" key="25">
    <source>
    </source>
</evidence>
<evidence type="ECO:0007829" key="26">
    <source>
        <dbReference type="PDB" id="2CPN"/>
    </source>
</evidence>
<evidence type="ECO:0007829" key="27">
    <source>
        <dbReference type="PDB" id="3ADL"/>
    </source>
</evidence>
<evidence type="ECO:0007829" key="28">
    <source>
        <dbReference type="PDB" id="3LLH"/>
    </source>
</evidence>
<evidence type="ECO:0007829" key="29">
    <source>
        <dbReference type="PDB" id="4WYQ"/>
    </source>
</evidence>
<evidence type="ECO:0007829" key="30">
    <source>
        <dbReference type="PDB" id="5N8L"/>
    </source>
</evidence>
<evidence type="ECO:0007829" key="31">
    <source>
        <dbReference type="PDB" id="6ZBK"/>
    </source>
</evidence>
<sequence>MSEEEQGSGTTTGCGLPSIEQMLAANPGKTPISLLQEYGTRIGKTPVYDLLKAEGQAHQPNFTFRVTVGDTSCTGQGPSKKAAKHKAAEVALKHLKGGSMLEPALEDSSSFSPLDSSLPEDIPVFTAAAAATPVPSVVLTRSPPMELQPPVSPQQSECNPVGALQELVVQKGWRLPEYTVTQESGPAHRKEFTMTCRVERFIEIGSGTSKKLAKRNAAAKMLLRVHTVPLDARDGNEVEPDDDHFSIGVGSRLDGLRNRGPGCTWDSLRNSVGEKILSLRSCSLGSLGALGPACCRVLSELSEEQAFHVSYLDIEELSLSGLCQCLVELSTQPATVCHGSATTREAARGEAARRALQYLKIMAGSK</sequence>
<protein>
    <recommendedName>
        <fullName evidence="2">RISC-loading complex subunit TARBP2</fullName>
    </recommendedName>
    <alternativeName>
        <fullName>TAR RNA-binding protein 2</fullName>
    </alternativeName>
    <alternativeName>
        <fullName>Trans-activation-responsive RNA-binding protein</fullName>
    </alternativeName>
</protein>
<dbReference type="EMBL" id="M60801">
    <property type="protein sequence ID" value="AAA36765.1"/>
    <property type="molecule type" value="mRNA"/>
</dbReference>
<dbReference type="EMBL" id="U08998">
    <property type="protein sequence ID" value="AAB50581.2"/>
    <property type="molecule type" value="mRNA"/>
</dbReference>
<dbReference type="EMBL" id="BT007140">
    <property type="protein sequence ID" value="AAP35804.1"/>
    <property type="molecule type" value="mRNA"/>
</dbReference>
<dbReference type="EMBL" id="CH471054">
    <property type="protein sequence ID" value="EAW96720.1"/>
    <property type="molecule type" value="Genomic_DNA"/>
</dbReference>
<dbReference type="EMBL" id="BC005860">
    <property type="protein sequence ID" value="AAH05860.1"/>
    <property type="molecule type" value="mRNA"/>
</dbReference>
<dbReference type="EMBL" id="AF281068">
    <property type="protein sequence ID" value="AAL55730.1"/>
    <property type="molecule type" value="Genomic_DNA"/>
</dbReference>
<dbReference type="EMBL" id="AF281068">
    <property type="protein sequence ID" value="AAL55731.1"/>
    <property type="molecule type" value="Genomic_DNA"/>
</dbReference>
<dbReference type="CCDS" id="CCDS41791.1">
    <molecule id="Q15633-2"/>
</dbReference>
<dbReference type="CCDS" id="CCDS8861.1">
    <molecule id="Q15633-1"/>
</dbReference>
<dbReference type="PIR" id="G01420">
    <property type="entry name" value="G01420"/>
</dbReference>
<dbReference type="RefSeq" id="NP_004169.3">
    <molecule id="Q15633-2"/>
    <property type="nucleotide sequence ID" value="NM_004178.4"/>
</dbReference>
<dbReference type="RefSeq" id="NP_599150.1">
    <molecule id="Q15633-1"/>
    <property type="nucleotide sequence ID" value="NM_134323.2"/>
</dbReference>
<dbReference type="RefSeq" id="NP_599151.2">
    <molecule id="Q15633-2"/>
    <property type="nucleotide sequence ID" value="NM_134324.3"/>
</dbReference>
<dbReference type="RefSeq" id="XP_005269171.1">
    <property type="nucleotide sequence ID" value="XM_005269114.1"/>
</dbReference>
<dbReference type="RefSeq" id="XP_005269172.1">
    <molecule id="Q15633-2"/>
    <property type="nucleotide sequence ID" value="XM_005269115.2"/>
</dbReference>
<dbReference type="RefSeq" id="XP_054229077.1">
    <molecule id="Q15633-2"/>
    <property type="nucleotide sequence ID" value="XM_054373102.1"/>
</dbReference>
<dbReference type="PDB" id="2CPN">
    <property type="method" value="NMR"/>
    <property type="chains" value="A=150-225"/>
</dbReference>
<dbReference type="PDB" id="3ADL">
    <property type="method" value="X-ray"/>
    <property type="resolution" value="2.20 A"/>
    <property type="chains" value="A=161-231"/>
</dbReference>
<dbReference type="PDB" id="3LLH">
    <property type="method" value="X-ray"/>
    <property type="resolution" value="2.14 A"/>
    <property type="chains" value="A/B=22-105"/>
</dbReference>
<dbReference type="PDB" id="4WYQ">
    <property type="method" value="X-ray"/>
    <property type="resolution" value="3.20 A"/>
    <property type="chains" value="B/E=289-363"/>
</dbReference>
<dbReference type="PDB" id="5N8L">
    <property type="method" value="NMR"/>
    <property type="chains" value="A=16-227"/>
</dbReference>
<dbReference type="PDB" id="5N8M">
    <property type="method" value="NMR"/>
    <property type="chains" value="A=16-227"/>
</dbReference>
<dbReference type="PDB" id="5ZAK">
    <property type="method" value="EM"/>
    <property type="resolution" value="4.40 A"/>
    <property type="chains" value="B=1-366"/>
</dbReference>
<dbReference type="PDB" id="5ZAL">
    <property type="method" value="EM"/>
    <property type="resolution" value="4.70 A"/>
    <property type="chains" value="B=1-366"/>
</dbReference>
<dbReference type="PDB" id="5ZAM">
    <property type="method" value="EM"/>
    <property type="resolution" value="5.70 A"/>
    <property type="chains" value="B=1-366"/>
</dbReference>
<dbReference type="PDB" id="6ZBK">
    <property type="method" value="X-ray"/>
    <property type="resolution" value="1.49 A"/>
    <property type="chains" value="B=262-366"/>
</dbReference>
<dbReference type="PDBsum" id="2CPN"/>
<dbReference type="PDBsum" id="3ADL"/>
<dbReference type="PDBsum" id="3LLH"/>
<dbReference type="PDBsum" id="4WYQ"/>
<dbReference type="PDBsum" id="5N8L"/>
<dbReference type="PDBsum" id="5N8M"/>
<dbReference type="PDBsum" id="5ZAK"/>
<dbReference type="PDBsum" id="5ZAL"/>
<dbReference type="PDBsum" id="5ZAM"/>
<dbReference type="PDBsum" id="6ZBK"/>
<dbReference type="BMRB" id="Q15633"/>
<dbReference type="EMDB" id="EMD-6904"/>
<dbReference type="EMDB" id="EMD-6905"/>
<dbReference type="EMDB" id="EMD-6906"/>
<dbReference type="SMR" id="Q15633"/>
<dbReference type="BioGRID" id="112758">
    <property type="interactions" value="173"/>
</dbReference>
<dbReference type="ComplexPortal" id="CPX-134">
    <property type="entry name" value="RISC-loading complex, TARBP2 variant"/>
</dbReference>
<dbReference type="CORUM" id="Q15633"/>
<dbReference type="DIP" id="DIP-29665N"/>
<dbReference type="FunCoup" id="Q15633">
    <property type="interactions" value="2325"/>
</dbReference>
<dbReference type="IntAct" id="Q15633">
    <property type="interactions" value="95"/>
</dbReference>
<dbReference type="MINT" id="Q15633"/>
<dbReference type="STRING" id="9606.ENSP00000266987"/>
<dbReference type="BindingDB" id="Q15633"/>
<dbReference type="ChEMBL" id="CHEMBL2098"/>
<dbReference type="DrugCentral" id="Q15633"/>
<dbReference type="GlyGen" id="Q15633">
    <property type="glycosylation" value="2 sites, 1 O-linked glycan (1 site)"/>
</dbReference>
<dbReference type="iPTMnet" id="Q15633"/>
<dbReference type="PhosphoSitePlus" id="Q15633"/>
<dbReference type="BioMuta" id="TARBP2"/>
<dbReference type="DMDM" id="209572714"/>
<dbReference type="jPOST" id="Q15633"/>
<dbReference type="MassIVE" id="Q15633"/>
<dbReference type="PaxDb" id="9606-ENSP00000266987"/>
<dbReference type="PeptideAtlas" id="Q15633"/>
<dbReference type="ProteomicsDB" id="60666">
    <molecule id="Q15633-1"/>
</dbReference>
<dbReference type="ProteomicsDB" id="60667">
    <molecule id="Q15633-2"/>
</dbReference>
<dbReference type="Pumba" id="Q15633"/>
<dbReference type="Antibodypedia" id="15253">
    <property type="antibodies" value="421 antibodies from 35 providers"/>
</dbReference>
<dbReference type="DNASU" id="6895"/>
<dbReference type="Ensembl" id="ENST00000266987.7">
    <molecule id="Q15633-1"/>
    <property type="protein sequence ID" value="ENSP00000266987.2"/>
    <property type="gene ID" value="ENSG00000139546.12"/>
</dbReference>
<dbReference type="Ensembl" id="ENST00000394357.6">
    <molecule id="Q15633-2"/>
    <property type="protein sequence ID" value="ENSP00000377885.2"/>
    <property type="gene ID" value="ENSG00000139546.12"/>
</dbReference>
<dbReference type="Ensembl" id="ENST00000456234.6">
    <molecule id="Q15633-2"/>
    <property type="protein sequence ID" value="ENSP00000416077.2"/>
    <property type="gene ID" value="ENSG00000139546.12"/>
</dbReference>
<dbReference type="GeneID" id="6895"/>
<dbReference type="KEGG" id="hsa:6895"/>
<dbReference type="MANE-Select" id="ENST00000266987.7">
    <property type="protein sequence ID" value="ENSP00000266987.2"/>
    <property type="RefSeq nucleotide sequence ID" value="NM_134323.2"/>
    <property type="RefSeq protein sequence ID" value="NP_599150.1"/>
</dbReference>
<dbReference type="UCSC" id="uc001sdo.4">
    <molecule id="Q15633-1"/>
    <property type="organism name" value="human"/>
</dbReference>
<dbReference type="AGR" id="HGNC:11569"/>
<dbReference type="CTD" id="6895"/>
<dbReference type="DisGeNET" id="6895"/>
<dbReference type="GeneCards" id="TARBP2"/>
<dbReference type="HGNC" id="HGNC:11569">
    <property type="gene designation" value="TARBP2"/>
</dbReference>
<dbReference type="HPA" id="ENSG00000139546">
    <property type="expression patterns" value="Low tissue specificity"/>
</dbReference>
<dbReference type="MalaCards" id="TARBP2"/>
<dbReference type="MIM" id="605053">
    <property type="type" value="gene"/>
</dbReference>
<dbReference type="neXtProt" id="NX_Q15633"/>
<dbReference type="OpenTargets" id="ENSG00000139546"/>
<dbReference type="PharmGKB" id="PA36334"/>
<dbReference type="VEuPathDB" id="HostDB:ENSG00000139546"/>
<dbReference type="eggNOG" id="KOG3732">
    <property type="taxonomic scope" value="Eukaryota"/>
</dbReference>
<dbReference type="GeneTree" id="ENSGT00940000157748"/>
<dbReference type="HOGENOM" id="CLU_048292_2_0_1"/>
<dbReference type="InParanoid" id="Q15633"/>
<dbReference type="OMA" id="GYSCTWD"/>
<dbReference type="OrthoDB" id="10056847at2759"/>
<dbReference type="PAN-GO" id="Q15633">
    <property type="GO annotations" value="8 GO annotations based on evolutionary models"/>
</dbReference>
<dbReference type="PhylomeDB" id="Q15633"/>
<dbReference type="TreeFam" id="TF315953"/>
<dbReference type="PathwayCommons" id="Q15633"/>
<dbReference type="Reactome" id="R-HSA-203927">
    <property type="pathway name" value="MicroRNA (miRNA) biogenesis"/>
</dbReference>
<dbReference type="Reactome" id="R-HSA-426486">
    <property type="pathway name" value="Small interfering RNA (siRNA) biogenesis"/>
</dbReference>
<dbReference type="Reactome" id="R-HSA-9833482">
    <property type="pathway name" value="PKR-mediated signaling"/>
</dbReference>
<dbReference type="SignaLink" id="Q15633"/>
<dbReference type="SIGNOR" id="Q15633"/>
<dbReference type="BioGRID-ORCS" id="6895">
    <property type="hits" value="13 hits in 1158 CRISPR screens"/>
</dbReference>
<dbReference type="CD-CODE" id="DEE660B4">
    <property type="entry name" value="Stress granule"/>
</dbReference>
<dbReference type="EvolutionaryTrace" id="Q15633"/>
<dbReference type="GeneWiki" id="TARBP2"/>
<dbReference type="GenomeRNAi" id="6895"/>
<dbReference type="Pharos" id="Q15633">
    <property type="development level" value="Tchem"/>
</dbReference>
<dbReference type="PRO" id="PR:Q15633"/>
<dbReference type="Proteomes" id="UP000005640">
    <property type="component" value="Chromosome 12"/>
</dbReference>
<dbReference type="RNAct" id="Q15633">
    <property type="molecule type" value="protein"/>
</dbReference>
<dbReference type="Bgee" id="ENSG00000139546">
    <property type="expression patterns" value="Expressed in right hemisphere of cerebellum and 134 other cell types or tissues"/>
</dbReference>
<dbReference type="ExpressionAtlas" id="Q15633">
    <property type="expression patterns" value="baseline and differential"/>
</dbReference>
<dbReference type="GO" id="GO:0005737">
    <property type="term" value="C:cytoplasm"/>
    <property type="evidence" value="ECO:0000314"/>
    <property type="project" value="UniProtKB"/>
</dbReference>
<dbReference type="GO" id="GO:0005829">
    <property type="term" value="C:cytosol"/>
    <property type="evidence" value="ECO:0000304"/>
    <property type="project" value="Reactome"/>
</dbReference>
<dbReference type="GO" id="GO:0016604">
    <property type="term" value="C:nuclear body"/>
    <property type="evidence" value="ECO:0000314"/>
    <property type="project" value="HPA"/>
</dbReference>
<dbReference type="GO" id="GO:0005654">
    <property type="term" value="C:nucleoplasm"/>
    <property type="evidence" value="ECO:0000314"/>
    <property type="project" value="HPA"/>
</dbReference>
<dbReference type="GO" id="GO:0005634">
    <property type="term" value="C:nucleus"/>
    <property type="evidence" value="ECO:0000318"/>
    <property type="project" value="GO_Central"/>
</dbReference>
<dbReference type="GO" id="GO:0048471">
    <property type="term" value="C:perinuclear region of cytoplasm"/>
    <property type="evidence" value="ECO:0007669"/>
    <property type="project" value="UniProtKB-SubCell"/>
</dbReference>
<dbReference type="GO" id="GO:0016442">
    <property type="term" value="C:RISC complex"/>
    <property type="evidence" value="ECO:0000314"/>
    <property type="project" value="UniProtKB"/>
</dbReference>
<dbReference type="GO" id="GO:0070578">
    <property type="term" value="C:RISC-loading complex"/>
    <property type="evidence" value="ECO:0000314"/>
    <property type="project" value="UniProtKB"/>
</dbReference>
<dbReference type="GO" id="GO:0003725">
    <property type="term" value="F:double-stranded RNA binding"/>
    <property type="evidence" value="ECO:0000314"/>
    <property type="project" value="BHF-UCL"/>
</dbReference>
<dbReference type="GO" id="GO:0019899">
    <property type="term" value="F:enzyme binding"/>
    <property type="evidence" value="ECO:0000353"/>
    <property type="project" value="BHF-UCL"/>
</dbReference>
<dbReference type="GO" id="GO:0042802">
    <property type="term" value="F:identical protein binding"/>
    <property type="evidence" value="ECO:0000353"/>
    <property type="project" value="IntAct"/>
</dbReference>
<dbReference type="GO" id="GO:0035198">
    <property type="term" value="F:miRNA binding"/>
    <property type="evidence" value="ECO:0007669"/>
    <property type="project" value="UniProtKB-UniRule"/>
</dbReference>
<dbReference type="GO" id="GO:0070883">
    <property type="term" value="F:pre-miRNA binding"/>
    <property type="evidence" value="ECO:0000314"/>
    <property type="project" value="BHF-UCL"/>
</dbReference>
<dbReference type="GO" id="GO:0036002">
    <property type="term" value="F:pre-mRNA binding"/>
    <property type="evidence" value="ECO:0000304"/>
    <property type="project" value="BHF-UCL"/>
</dbReference>
<dbReference type="GO" id="GO:0042803">
    <property type="term" value="F:protein homodimerization activity"/>
    <property type="evidence" value="ECO:0000353"/>
    <property type="project" value="UniProtKB"/>
</dbReference>
<dbReference type="GO" id="GO:0140311">
    <property type="term" value="F:protein sequestering activity"/>
    <property type="evidence" value="ECO:0000314"/>
    <property type="project" value="UniProt"/>
</dbReference>
<dbReference type="GO" id="GO:0035197">
    <property type="term" value="F:siRNA binding"/>
    <property type="evidence" value="ECO:0000314"/>
    <property type="project" value="UniProtKB"/>
</dbReference>
<dbReference type="GO" id="GO:0098795">
    <property type="term" value="P:global gene silencing by mRNA cleavage"/>
    <property type="evidence" value="ECO:0000315"/>
    <property type="project" value="UniProtKB"/>
</dbReference>
<dbReference type="GO" id="GO:0035196">
    <property type="term" value="P:miRNA processing"/>
    <property type="evidence" value="ECO:0000314"/>
    <property type="project" value="UniProtKB"/>
</dbReference>
<dbReference type="GO" id="GO:0035264">
    <property type="term" value="P:multicellular organism growth"/>
    <property type="evidence" value="ECO:0007669"/>
    <property type="project" value="Ensembl"/>
</dbReference>
<dbReference type="GO" id="GO:0039532">
    <property type="term" value="P:negative regulation of cytoplasmic pattern recognition receptor signaling pathway"/>
    <property type="evidence" value="ECO:0000314"/>
    <property type="project" value="UniProt"/>
</dbReference>
<dbReference type="GO" id="GO:0050689">
    <property type="term" value="P:negative regulation of defense response to virus by host"/>
    <property type="evidence" value="ECO:0000314"/>
    <property type="project" value="UniProtKB"/>
</dbReference>
<dbReference type="GO" id="GO:0006469">
    <property type="term" value="P:negative regulation of protein kinase activity"/>
    <property type="evidence" value="ECO:0000304"/>
    <property type="project" value="UniProtKB"/>
</dbReference>
<dbReference type="GO" id="GO:0061351">
    <property type="term" value="P:neural precursor cell proliferation"/>
    <property type="evidence" value="ECO:0007669"/>
    <property type="project" value="Ensembl"/>
</dbReference>
<dbReference type="GO" id="GO:0051149">
    <property type="term" value="P:positive regulation of muscle cell differentiation"/>
    <property type="evidence" value="ECO:0007669"/>
    <property type="project" value="Ensembl"/>
</dbReference>
<dbReference type="GO" id="GO:0045727">
    <property type="term" value="P:positive regulation of translation"/>
    <property type="evidence" value="ECO:0007669"/>
    <property type="project" value="Ensembl"/>
</dbReference>
<dbReference type="GO" id="GO:0045070">
    <property type="term" value="P:positive regulation of viral genome replication"/>
    <property type="evidence" value="ECO:0000314"/>
    <property type="project" value="UniProtKB"/>
</dbReference>
<dbReference type="GO" id="GO:0031054">
    <property type="term" value="P:pre-miRNA processing"/>
    <property type="evidence" value="ECO:0000314"/>
    <property type="project" value="UniProtKB"/>
</dbReference>
<dbReference type="GO" id="GO:1903798">
    <property type="term" value="P:regulation of miRNA processing"/>
    <property type="evidence" value="ECO:0007669"/>
    <property type="project" value="Ensembl"/>
</dbReference>
<dbReference type="GO" id="GO:0070920">
    <property type="term" value="P:regulation of regulatory ncRNA processing"/>
    <property type="evidence" value="ECO:0000318"/>
    <property type="project" value="GO_Central"/>
</dbReference>
<dbReference type="GO" id="GO:0070921">
    <property type="term" value="P:regulation of siRNA processing"/>
    <property type="evidence" value="ECO:0007669"/>
    <property type="project" value="InterPro"/>
</dbReference>
<dbReference type="GO" id="GO:0046782">
    <property type="term" value="P:regulation of viral transcription"/>
    <property type="evidence" value="ECO:0000314"/>
    <property type="project" value="UniProtKB"/>
</dbReference>
<dbReference type="GO" id="GO:0070922">
    <property type="term" value="P:RISC complex assembly"/>
    <property type="evidence" value="ECO:0000314"/>
    <property type="project" value="UniProtKB"/>
</dbReference>
<dbReference type="GO" id="GO:0007338">
    <property type="term" value="P:single fertilization"/>
    <property type="evidence" value="ECO:0007669"/>
    <property type="project" value="Ensembl"/>
</dbReference>
<dbReference type="GO" id="GO:0030422">
    <property type="term" value="P:siRNA processing"/>
    <property type="evidence" value="ECO:0000314"/>
    <property type="project" value="UniProtKB"/>
</dbReference>
<dbReference type="GO" id="GO:0043403">
    <property type="term" value="P:skeletal muscle tissue regeneration"/>
    <property type="evidence" value="ECO:0007669"/>
    <property type="project" value="Ensembl"/>
</dbReference>
<dbReference type="GO" id="GO:0007286">
    <property type="term" value="P:spermatid development"/>
    <property type="evidence" value="ECO:0007669"/>
    <property type="project" value="Ensembl"/>
</dbReference>
<dbReference type="CDD" id="cd19890">
    <property type="entry name" value="DSRM_TARBP2_rpt1"/>
    <property type="match status" value="1"/>
</dbReference>
<dbReference type="CDD" id="cd10844">
    <property type="entry name" value="DSRM_TARBP2_rpt2"/>
    <property type="match status" value="1"/>
</dbReference>
<dbReference type="CDD" id="cd19893">
    <property type="entry name" value="DSRM_TARBP2_rpt3"/>
    <property type="match status" value="1"/>
</dbReference>
<dbReference type="FunFam" id="3.30.160.20:FF:000019">
    <property type="entry name" value="RISC-loading complex subunit TARBP2"/>
    <property type="match status" value="1"/>
</dbReference>
<dbReference type="FunFam" id="3.30.160.20:FF:000120">
    <property type="entry name" value="RISC-loading complex subunit TARBP2"/>
    <property type="match status" value="1"/>
</dbReference>
<dbReference type="FunFam" id="3.30.160.20:FF:000018">
    <property type="entry name" value="RISC-loading complex subunit TARBP2 isoform X3"/>
    <property type="match status" value="1"/>
</dbReference>
<dbReference type="Gene3D" id="3.30.160.20">
    <property type="match status" value="3"/>
</dbReference>
<dbReference type="HAMAP" id="MF_03034">
    <property type="entry name" value="TRBP2"/>
    <property type="match status" value="1"/>
</dbReference>
<dbReference type="InterPro" id="IPR014720">
    <property type="entry name" value="dsRBD_dom"/>
</dbReference>
<dbReference type="InterPro" id="IPR051247">
    <property type="entry name" value="RLC_Component"/>
</dbReference>
<dbReference type="InterPro" id="IPR028605">
    <property type="entry name" value="TRBP2"/>
</dbReference>
<dbReference type="InterPro" id="IPR044469">
    <property type="entry name" value="TRBP2_DSRM_1"/>
</dbReference>
<dbReference type="InterPro" id="IPR044470">
    <property type="entry name" value="TRBP2_DSRM_2"/>
</dbReference>
<dbReference type="InterPro" id="IPR044471">
    <property type="entry name" value="TRBP2_DSRM_3"/>
</dbReference>
<dbReference type="PANTHER" id="PTHR46205">
    <property type="entry name" value="LOQUACIOUS, ISOFORM B"/>
    <property type="match status" value="1"/>
</dbReference>
<dbReference type="PANTHER" id="PTHR46205:SF1">
    <property type="entry name" value="RISC-LOADING COMPLEX SUBUNIT TARBP2"/>
    <property type="match status" value="1"/>
</dbReference>
<dbReference type="Pfam" id="PF00035">
    <property type="entry name" value="dsrm"/>
    <property type="match status" value="2"/>
</dbReference>
<dbReference type="SMART" id="SM00358">
    <property type="entry name" value="DSRM"/>
    <property type="match status" value="3"/>
</dbReference>
<dbReference type="SUPFAM" id="SSF54768">
    <property type="entry name" value="dsRNA-binding domain-like"/>
    <property type="match status" value="3"/>
</dbReference>
<dbReference type="PROSITE" id="PS50137">
    <property type="entry name" value="DS_RBD"/>
    <property type="match status" value="3"/>
</dbReference>
<accession>Q15633</accession>
<accession>Q12878</accession>
<accession>Q8WY32</accession>
<accession>Q8WY33</accession>
<accession>Q9BRY2</accession>
<comment type="function">
    <text evidence="1 2 5 6 7 8 9 10 13 17 19">Required for formation of the RNA induced silencing complex (RISC). Component of the RISC loading complex (RLC), also known as the micro-RNA (miRNA) loading complex (miRLC), which is composed of DICER1, AGO2 and TARBP2. Within the RLC/miRLC, DICER1 and TARBP2 are required to process precursor miRNAs (pre-miRNAs) to mature miRNAs and then load them onto AGO2. AGO2 bound to the mature miRNA constitutes the minimal RISC and may subsequently dissociate from DICER1 and TARBP2. May also play a role in the production of short interfering RNAs (siRNAs) from double-stranded RNA (dsRNA) by DICER1 (By similarity) (PubMed:15973356, PubMed:16142218, PubMed:16271387, PubMed:16357216, PubMed:16424907, PubMed:17452327, PubMed:18178619). Binds in vitro to the PRM1 3'-UTR (By similarity). Seems to act as a repressor of translation (By similarity). For some pre-miRNA substrates, may also alter the choice of cleavage site by DICER1 (PubMed:23063653). Negatively regulates IRF7-mediated IFN-beta signaling triggered by viral infection by inhibiting the phosphorylation of IRF7 and promoting its 'Lys'-48-linked ubiquitination and degradation (PubMed:30927622).</text>
</comment>
<comment type="function">
    <text evidence="3 4 15 18">(Microbial infection) Binds to the HIV-1 TAR RNA which is located in the long terminal repeat (LTR) of HIV-1, and stimulates translation of TAR-containing RNAs (PubMed:11438532, PubMed:12475984, PubMed:2011739). This is achieved in part at least by binding to and inhibiting EIF2AK2/PKR, thereby reducing phosphorylation and inhibition of EIF2S1/eIF-2-alpha (PubMed:11438532). May also promote translation of TAR-containing RNAs independently of EIF2AK2/PKR (PubMed:12475984). Mediates recruitment of FTSJ3 methyltransferase to HIV-1 RNA, leading to 2'-O-methylation of the viral genome, allowing HIV-1 to escape the innate immune system (PubMed:30626973).</text>
</comment>
<comment type="subunit">
    <text evidence="2 3 5 6 7 8 9 10 11 12 13 14 19">Self-associates. Component of the RISC loading complex (RLC), or micro-RNA (miRNA) loading complex (miRLC), which is composed of DICER1, AGO2 and TARBP2. Note that the trimeric RLC/miRLC is also referred to as RISC. Interacts with EIF2AK2/PKR and inhibits its protein kinase activity. Interacts with DHX9 and PRKRA. Interacts with DICER1, AGO2, MOV10, EIF6 and RPL7A (60S ribosome subunit); they form a large RNA-induced silencing complex (RISC) (PubMed:17507929). Interacts with IRF7; this interaction prevents IRF7 phosphorylation and activation (PubMed:30927622).</text>
</comment>
<comment type="subunit">
    <text evidence="18">(Microbial infection) Interacts with FTSJ3; forms a complex with FTSJ3 and HIV-1 TAR RNA.</text>
</comment>
<comment type="subunit">
    <text evidence="16">(Microbial infection) Interacts with ebolavirus VP30; this interaction, which occurs only in the presence of siRNA, prevents TARBP2 binding to DICER1 and thus allows the virus to counteract host RNA silencing.</text>
</comment>
<comment type="subunit">
    <text evidence="16">(Microbial infection) Interacts with ebolavirus VP35; this interaction prevents TARBP2 binding to DICER1 and thus allows the virus to counteract host RNA silencing.</text>
</comment>
<comment type="interaction">
    <interactant intactId="EBI-978581">
        <id>Q15633</id>
    </interactant>
    <interactant intactId="EBI-6913056">
        <id>P55265-1</id>
        <label>ADAR</label>
    </interactant>
    <organismsDiffer>false</organismsDiffer>
    <experiments>2</experiments>
</comment>
<comment type="interaction">
    <interactant intactId="EBI-978581">
        <id>Q15633</id>
    </interactant>
    <interactant intactId="EBI-6913210">
        <id>P55265-5</id>
        <label>ADAR</label>
    </interactant>
    <organismsDiffer>false</organismsDiffer>
    <experiments>3</experiments>
</comment>
<comment type="interaction">
    <interactant intactId="EBI-978581">
        <id>Q15633</id>
    </interactant>
    <interactant intactId="EBI-12002366">
        <id>P78563-4</id>
        <label>ADARB1</label>
    </interactant>
    <organismsDiffer>false</organismsDiffer>
    <experiments>3</experiments>
</comment>
<comment type="interaction">
    <interactant intactId="EBI-978581">
        <id>Q15633</id>
    </interactant>
    <interactant intactId="EBI-528269">
        <id>Q9UKV8</id>
        <label>AGO2</label>
    </interactant>
    <organismsDiffer>false</organismsDiffer>
    <experiments>12</experiments>
</comment>
<comment type="interaction">
    <interactant intactId="EBI-978581">
        <id>Q15633</id>
    </interactant>
    <interactant intactId="EBI-395506">
        <id>Q9UPY3</id>
        <label>DICER1</label>
    </interactant>
    <organismsDiffer>false</organismsDiffer>
    <experiments>25</experiments>
</comment>
<comment type="interaction">
    <interactant intactId="EBI-978581">
        <id>Q15633</id>
    </interactant>
    <interactant intactId="EBI-15569571">
        <id>Q9UPY3-1</id>
        <label>DICER1</label>
    </interactant>
    <organismsDiffer>false</organismsDiffer>
    <experiments>5</experiments>
</comment>
<comment type="interaction">
    <interactant intactId="EBI-978581">
        <id>Q15633</id>
    </interactant>
    <interactant intactId="EBI-640775">
        <id>P19525</id>
        <label>EIF2AK2</label>
    </interactant>
    <organismsDiffer>false</organismsDiffer>
    <experiments>2</experiments>
</comment>
<comment type="interaction">
    <interactant intactId="EBI-978581">
        <id>Q15633</id>
    </interactant>
    <interactant intactId="EBI-1045072">
        <id>Q96T60</id>
        <label>PNKP</label>
    </interactant>
    <organismsDiffer>false</organismsDiffer>
    <experiments>3</experiments>
</comment>
<comment type="interaction">
    <interactant intactId="EBI-978581">
        <id>Q15633</id>
    </interactant>
    <interactant intactId="EBI-713955">
        <id>O75569</id>
        <label>PRKRA</label>
    </interactant>
    <organismsDiffer>false</organismsDiffer>
    <experiments>15</experiments>
</comment>
<comment type="interaction">
    <interactant intactId="EBI-978581">
        <id>Q15633</id>
    </interactant>
    <interactant intactId="EBI-740355">
        <id>Q96SI9</id>
        <label>STRBP</label>
    </interactant>
    <organismsDiffer>false</organismsDiffer>
    <experiments>4</experiments>
</comment>
<comment type="interaction">
    <interactant intactId="EBI-978581">
        <id>Q15633</id>
    </interactant>
    <interactant intactId="EBI-978581">
        <id>Q15633</id>
        <label>TARBP2</label>
    </interactant>
    <organismsDiffer>false</organismsDiffer>
    <experiments>5</experiments>
</comment>
<comment type="interaction">
    <interactant intactId="EBI-978581">
        <id>Q15633</id>
    </interactant>
    <interactant intactId="EBI-710310">
        <id>Q15560</id>
        <label>TCEA2</label>
    </interactant>
    <organismsDiffer>false</organismsDiffer>
    <experiments>3</experiments>
</comment>
<comment type="interaction">
    <interactant intactId="EBI-978581">
        <id>Q15633</id>
    </interactant>
    <interactant intactId="EBI-954696">
        <id>Q8N8B7</id>
        <label>TCEANC</label>
    </interactant>
    <organismsDiffer>false</organismsDiffer>
    <experiments>3</experiments>
</comment>
<comment type="interaction">
    <interactant intactId="EBI-978581">
        <id>Q15633</id>
    </interactant>
    <interactant intactId="EBI-11955057">
        <id>Q8N8B7-2</id>
        <label>TCEANC</label>
    </interactant>
    <organismsDiffer>false</organismsDiffer>
    <experiments>3</experiments>
</comment>
<comment type="interaction">
    <interactant intactId="EBI-978581">
        <id>Q15633</id>
    </interactant>
    <interactant intactId="EBI-2548480">
        <id>Q9HA38</id>
        <label>ZMAT3</label>
    </interactant>
    <organismsDiffer>false</organismsDiffer>
    <experiments>3</experiments>
</comment>
<comment type="interaction">
    <interactant intactId="EBI-978581">
        <id>Q15633</id>
    </interactant>
    <interactant intactId="EBI-11529334">
        <id>Q9H898-2</id>
        <label>ZMAT4</label>
    </interactant>
    <organismsDiffer>false</organismsDiffer>
    <experiments>3</experiments>
</comment>
<comment type="interaction">
    <interactant intactId="EBI-978581">
        <id>Q15633</id>
    </interactant>
    <interactant intactId="EBI-2462313">
        <id>Q9UL40</id>
        <label>ZNF346</label>
    </interactant>
    <organismsDiffer>false</organismsDiffer>
    <experiments>6</experiments>
</comment>
<comment type="interaction">
    <interactant intactId="EBI-978581">
        <id>Q15633</id>
    </interactant>
    <interactant intactId="EBI-25475856">
        <id>P0DTC9</id>
        <label>N</label>
    </interactant>
    <organismsDiffer>true</organismsDiffer>
    <experiments>5</experiments>
</comment>
<comment type="subcellular location">
    <subcellularLocation>
        <location>Cytoplasm</location>
    </subcellularLocation>
    <subcellularLocation>
        <location>Cytoplasm</location>
        <location>Perinuclear region</location>
    </subcellularLocation>
    <subcellularLocation>
        <location>Nucleus</location>
    </subcellularLocation>
</comment>
<comment type="alternative products">
    <event type="alternative promoter"/>
    <isoform>
        <id>Q15633-1</id>
        <name>1</name>
        <name>TRBP2</name>
        <sequence type="displayed"/>
    </isoform>
    <isoform>
        <id>Q15633-2</id>
        <name>2</name>
        <name>TRBP1</name>
        <sequence type="described" ref="VSP_035584"/>
    </isoform>
</comment>
<comment type="similarity">
    <text evidence="2">Belongs to the TARBP2 family.</text>
</comment>
<comment type="caution">
    <text evidence="23 24">A paper describing truncating mutations of TARBP2 in tumor cells and resultant effects on DICER1 stability and miRNA processing has been retracted, due to concerns of image duplication in some of the figures.</text>
</comment>
<name>TRBP2_HUMAN</name>
<proteinExistence type="evidence at protein level"/>
<organism>
    <name type="scientific">Homo sapiens</name>
    <name type="common">Human</name>
    <dbReference type="NCBI Taxonomy" id="9606"/>
    <lineage>
        <taxon>Eukaryota</taxon>
        <taxon>Metazoa</taxon>
        <taxon>Chordata</taxon>
        <taxon>Craniata</taxon>
        <taxon>Vertebrata</taxon>
        <taxon>Euteleostomi</taxon>
        <taxon>Mammalia</taxon>
        <taxon>Eutheria</taxon>
        <taxon>Euarchontoglires</taxon>
        <taxon>Primates</taxon>
        <taxon>Haplorrhini</taxon>
        <taxon>Catarrhini</taxon>
        <taxon>Hominidae</taxon>
        <taxon>Homo</taxon>
    </lineage>
</organism>
<gene>
    <name evidence="2" type="primary">TARBP2</name>
    <name type="synonym">TRBP</name>
</gene>
<keyword id="KW-0002">3D-structure</keyword>
<keyword id="KW-0877">Alternative promoter usage</keyword>
<keyword id="KW-0963">Cytoplasm</keyword>
<keyword id="KW-0539">Nucleus</keyword>
<keyword id="KW-0597">Phosphoprotein</keyword>
<keyword id="KW-1267">Proteomics identification</keyword>
<keyword id="KW-1185">Reference proteome</keyword>
<keyword id="KW-0677">Repeat</keyword>
<keyword id="KW-0694">RNA-binding</keyword>
<keyword id="KW-0943">RNA-mediated gene silencing</keyword>
<keyword id="KW-0810">Translation regulation</keyword>